<gene>
    <name type="primary">HAT2</name>
    <name type="ordered locus">CAALFM_C604540CA</name>
    <name type="ORF">CaO19.2146</name>
    <name type="ORF">CaO19.9693</name>
</gene>
<sequence length="382" mass="42856">MSEQPTEPLSIKEEYQLWRKNCRYMYEFVSETALMWPSLTIQWLPNYTTTNGLIDAKLLLGTHTSNQSANQLKVASTQLSADPNVKANSKIKTVQKLENNAEICRARYMPQDANIVATINGLGEVDLYNLDTETRYSHFAPHTKNGYGLSWNPKQKGLLVTGADDNFVCVTDTTTNKTTFKSDIQKDIVNDVKWHQFNGNLFASVSEDSHVYLFDARDNKVVSQYYAESSNGINSLAFSPFAENLVAIGNTSSNINLLDLRKLGENSGLLHTMMGHSEGITCMEFSPHHDGILATGSQDRRIIIWDLFKVGEEQQQEDAEDGCPELFMMHAGHTAGVSDLSWCPFKDWMIGSVADDNIVHLWEISKKLITNEEAEVDVSILE</sequence>
<feature type="chain" id="PRO_0000227735" description="Histone acetyltransferase type B subunit 2">
    <location>
        <begin position="1"/>
        <end position="382"/>
    </location>
</feature>
<feature type="repeat" description="WD 1">
    <location>
        <begin position="98"/>
        <end position="138"/>
    </location>
</feature>
<feature type="repeat" description="WD 2">
    <location>
        <begin position="141"/>
        <end position="181"/>
    </location>
</feature>
<feature type="repeat" description="WD 3">
    <location>
        <begin position="184"/>
        <end position="224"/>
    </location>
</feature>
<feature type="repeat" description="WD 4">
    <location>
        <begin position="228"/>
        <end position="268"/>
    </location>
</feature>
<feature type="repeat" description="WD 5">
    <location>
        <begin position="275"/>
        <end position="315"/>
    </location>
</feature>
<feature type="repeat" description="WD 6">
    <location>
        <begin position="332"/>
        <end position="372"/>
    </location>
</feature>
<feature type="region of interest" description="Interaction with the histone H4 N-terminus" evidence="2">
    <location>
        <begin position="317"/>
        <end position="321"/>
    </location>
</feature>
<feature type="site" description="Important for interaction with HAT1" evidence="2">
    <location>
        <position position="245"/>
    </location>
</feature>
<accession>Q59RH5</accession>
<accession>A0A1D8PQF8</accession>
<evidence type="ECO:0000250" key="1"/>
<evidence type="ECO:0000250" key="2">
    <source>
        <dbReference type="UniProtKB" id="P39984"/>
    </source>
</evidence>
<evidence type="ECO:0000305" key="3"/>
<keyword id="KW-0156">Chromatin regulator</keyword>
<keyword id="KW-0963">Cytoplasm</keyword>
<keyword id="KW-0539">Nucleus</keyword>
<keyword id="KW-1185">Reference proteome</keyword>
<keyword id="KW-0677">Repeat</keyword>
<keyword id="KW-0853">WD repeat</keyword>
<reference key="1">
    <citation type="journal article" date="2004" name="Proc. Natl. Acad. Sci. U.S.A.">
        <title>The diploid genome sequence of Candida albicans.</title>
        <authorList>
            <person name="Jones T."/>
            <person name="Federspiel N.A."/>
            <person name="Chibana H."/>
            <person name="Dungan J."/>
            <person name="Kalman S."/>
            <person name="Magee B.B."/>
            <person name="Newport G."/>
            <person name="Thorstenson Y.R."/>
            <person name="Agabian N."/>
            <person name="Magee P.T."/>
            <person name="Davis R.W."/>
            <person name="Scherer S."/>
        </authorList>
    </citation>
    <scope>NUCLEOTIDE SEQUENCE [LARGE SCALE GENOMIC DNA]</scope>
    <source>
        <strain>SC5314 / ATCC MYA-2876</strain>
    </source>
</reference>
<reference key="2">
    <citation type="journal article" date="2007" name="Genome Biol.">
        <title>Assembly of the Candida albicans genome into sixteen supercontigs aligned on the eight chromosomes.</title>
        <authorList>
            <person name="van het Hoog M."/>
            <person name="Rast T.J."/>
            <person name="Martchenko M."/>
            <person name="Grindle S."/>
            <person name="Dignard D."/>
            <person name="Hogues H."/>
            <person name="Cuomo C."/>
            <person name="Berriman M."/>
            <person name="Scherer S."/>
            <person name="Magee B.B."/>
            <person name="Whiteway M."/>
            <person name="Chibana H."/>
            <person name="Nantel A."/>
            <person name="Magee P.T."/>
        </authorList>
    </citation>
    <scope>GENOME REANNOTATION</scope>
    <source>
        <strain>SC5314 / ATCC MYA-2876</strain>
    </source>
</reference>
<reference key="3">
    <citation type="journal article" date="2013" name="Genome Biol.">
        <title>Assembly of a phased diploid Candida albicans genome facilitates allele-specific measurements and provides a simple model for repeat and indel structure.</title>
        <authorList>
            <person name="Muzzey D."/>
            <person name="Schwartz K."/>
            <person name="Weissman J.S."/>
            <person name="Sherlock G."/>
        </authorList>
    </citation>
    <scope>NUCLEOTIDE SEQUENCE [LARGE SCALE GENOMIC DNA]</scope>
    <scope>GENOME REANNOTATION</scope>
    <source>
        <strain>SC5314 / ATCC MYA-2876</strain>
    </source>
</reference>
<dbReference type="EMBL" id="CP017628">
    <property type="protein sequence ID" value="AOW30370.1"/>
    <property type="molecule type" value="Genomic_DNA"/>
</dbReference>
<dbReference type="RefSeq" id="XP_712421.1">
    <property type="nucleotide sequence ID" value="XM_707328.1"/>
</dbReference>
<dbReference type="SMR" id="Q59RH5"/>
<dbReference type="FunCoup" id="Q59RH5">
    <property type="interactions" value="1129"/>
</dbReference>
<dbReference type="STRING" id="237561.Q59RH5"/>
<dbReference type="EnsemblFungi" id="C6_04540C_A-T">
    <property type="protein sequence ID" value="C6_04540C_A-T-p1"/>
    <property type="gene ID" value="C6_04540C_A"/>
</dbReference>
<dbReference type="GeneID" id="3645973"/>
<dbReference type="KEGG" id="cal:CAALFM_C604540CA"/>
<dbReference type="CGD" id="CAL0000185853">
    <property type="gene designation" value="HAT2"/>
</dbReference>
<dbReference type="VEuPathDB" id="FungiDB:C6_04540C_A"/>
<dbReference type="eggNOG" id="KOG0264">
    <property type="taxonomic scope" value="Eukaryota"/>
</dbReference>
<dbReference type="HOGENOM" id="CLU_020445_3_1_1"/>
<dbReference type="InParanoid" id="Q59RH5"/>
<dbReference type="OMA" id="PHEEGCL"/>
<dbReference type="OrthoDB" id="427795at2759"/>
<dbReference type="PRO" id="PR:Q59RH5"/>
<dbReference type="Proteomes" id="UP000000559">
    <property type="component" value="Chromosome 6"/>
</dbReference>
<dbReference type="GO" id="GO:0005737">
    <property type="term" value="C:cytoplasm"/>
    <property type="evidence" value="ECO:0000318"/>
    <property type="project" value="GO_Central"/>
</dbReference>
<dbReference type="GO" id="GO:0005634">
    <property type="term" value="C:nucleus"/>
    <property type="evidence" value="ECO:0000314"/>
    <property type="project" value="CGD"/>
</dbReference>
<dbReference type="GO" id="GO:0033698">
    <property type="term" value="C:Rpd3L complex"/>
    <property type="evidence" value="ECO:0000318"/>
    <property type="project" value="GO_Central"/>
</dbReference>
<dbReference type="GO" id="GO:0070210">
    <property type="term" value="C:Rpd3L-Expanded complex"/>
    <property type="evidence" value="ECO:0000318"/>
    <property type="project" value="GO_Central"/>
</dbReference>
<dbReference type="GO" id="GO:0034614">
    <property type="term" value="P:cellular response to reactive oxygen species"/>
    <property type="evidence" value="ECO:0000315"/>
    <property type="project" value="CGD"/>
</dbReference>
<dbReference type="GO" id="GO:0006338">
    <property type="term" value="P:chromatin remodeling"/>
    <property type="evidence" value="ECO:0000318"/>
    <property type="project" value="GO_Central"/>
</dbReference>
<dbReference type="GO" id="GO:0140861">
    <property type="term" value="P:DNA repair-dependent chromatin remodeling"/>
    <property type="evidence" value="ECO:0000315"/>
    <property type="project" value="CGD"/>
</dbReference>
<dbReference type="GO" id="GO:2000221">
    <property type="term" value="P:negative regulation of pseudohyphal growth"/>
    <property type="evidence" value="ECO:0000315"/>
    <property type="project" value="CGD"/>
</dbReference>
<dbReference type="GO" id="GO:0006355">
    <property type="term" value="P:regulation of DNA-templated transcription"/>
    <property type="evidence" value="ECO:0000318"/>
    <property type="project" value="GO_Central"/>
</dbReference>
<dbReference type="FunFam" id="2.130.10.10:FF:001977">
    <property type="entry name" value="Histone acetyltransferase type B subunit 2"/>
    <property type="match status" value="1"/>
</dbReference>
<dbReference type="Gene3D" id="2.130.10.10">
    <property type="entry name" value="YVTN repeat-like/Quinoprotein amine dehydrogenase"/>
    <property type="match status" value="1"/>
</dbReference>
<dbReference type="InterPro" id="IPR022052">
    <property type="entry name" value="Histone-bd_RBBP4-like_N"/>
</dbReference>
<dbReference type="InterPro" id="IPR015943">
    <property type="entry name" value="WD40/YVTN_repeat-like_dom_sf"/>
</dbReference>
<dbReference type="InterPro" id="IPR019775">
    <property type="entry name" value="WD40_repeat_CS"/>
</dbReference>
<dbReference type="InterPro" id="IPR036322">
    <property type="entry name" value="WD40_repeat_dom_sf"/>
</dbReference>
<dbReference type="InterPro" id="IPR001680">
    <property type="entry name" value="WD40_rpt"/>
</dbReference>
<dbReference type="InterPro" id="IPR050459">
    <property type="entry name" value="WD_repeat_RBAP46/RBAP48/MSI1"/>
</dbReference>
<dbReference type="PANTHER" id="PTHR22850">
    <property type="entry name" value="WD40 REPEAT FAMILY"/>
    <property type="match status" value="1"/>
</dbReference>
<dbReference type="Pfam" id="PF12265">
    <property type="entry name" value="CAF1C_H4-bd"/>
    <property type="match status" value="1"/>
</dbReference>
<dbReference type="Pfam" id="PF00400">
    <property type="entry name" value="WD40"/>
    <property type="match status" value="3"/>
</dbReference>
<dbReference type="SMART" id="SM00320">
    <property type="entry name" value="WD40"/>
    <property type="match status" value="5"/>
</dbReference>
<dbReference type="SUPFAM" id="SSF50978">
    <property type="entry name" value="WD40 repeat-like"/>
    <property type="match status" value="1"/>
</dbReference>
<dbReference type="PROSITE" id="PS00678">
    <property type="entry name" value="WD_REPEATS_1"/>
    <property type="match status" value="2"/>
</dbReference>
<dbReference type="PROSITE" id="PS50082">
    <property type="entry name" value="WD_REPEATS_2"/>
    <property type="match status" value="2"/>
</dbReference>
<dbReference type="PROSITE" id="PS50294">
    <property type="entry name" value="WD_REPEATS_REGION"/>
    <property type="match status" value="1"/>
</dbReference>
<name>HAT2_CANAL</name>
<organism>
    <name type="scientific">Candida albicans (strain SC5314 / ATCC MYA-2876)</name>
    <name type="common">Yeast</name>
    <dbReference type="NCBI Taxonomy" id="237561"/>
    <lineage>
        <taxon>Eukaryota</taxon>
        <taxon>Fungi</taxon>
        <taxon>Dikarya</taxon>
        <taxon>Ascomycota</taxon>
        <taxon>Saccharomycotina</taxon>
        <taxon>Pichiomycetes</taxon>
        <taxon>Debaryomycetaceae</taxon>
        <taxon>Candida/Lodderomyces clade</taxon>
        <taxon>Candida</taxon>
    </lineage>
</organism>
<proteinExistence type="inferred from homology"/>
<protein>
    <recommendedName>
        <fullName>Histone acetyltransferase type B subunit 2</fullName>
    </recommendedName>
</protein>
<comment type="function">
    <text evidence="2">Regulatory subunit of the histone acetylase B (HAT-B) complex. The complex acetylates 'Lys-14' of histone H4 which is required for telomeric silencing.</text>
</comment>
<comment type="subunit">
    <text evidence="2">Component of the HAT-B complex composed of at least HAT1 and HAT2. The HAT-B complex binds to histone H4 tail.</text>
</comment>
<comment type="subcellular location">
    <subcellularLocation>
        <location evidence="1">Cytoplasm</location>
    </subcellularLocation>
    <subcellularLocation>
        <location evidence="1">Nucleus</location>
    </subcellularLocation>
</comment>
<comment type="similarity">
    <text evidence="3">Belongs to the WD repeat RBAP46/RBAP48/MSI1 family.</text>
</comment>